<dbReference type="EC" id="2.5.1.78" evidence="1"/>
<dbReference type="EMBL" id="CP000721">
    <property type="protein sequence ID" value="ABR33409.1"/>
    <property type="molecule type" value="Genomic_DNA"/>
</dbReference>
<dbReference type="SMR" id="A6LSS9"/>
<dbReference type="KEGG" id="cbe:Cbei_1227"/>
<dbReference type="eggNOG" id="COG0054">
    <property type="taxonomic scope" value="Bacteria"/>
</dbReference>
<dbReference type="HOGENOM" id="CLU_089358_1_1_9"/>
<dbReference type="UniPathway" id="UPA00275">
    <property type="reaction ID" value="UER00404"/>
</dbReference>
<dbReference type="Proteomes" id="UP000000565">
    <property type="component" value="Chromosome"/>
</dbReference>
<dbReference type="GO" id="GO:0005829">
    <property type="term" value="C:cytosol"/>
    <property type="evidence" value="ECO:0007669"/>
    <property type="project" value="TreeGrafter"/>
</dbReference>
<dbReference type="GO" id="GO:0009349">
    <property type="term" value="C:riboflavin synthase complex"/>
    <property type="evidence" value="ECO:0007669"/>
    <property type="project" value="InterPro"/>
</dbReference>
<dbReference type="GO" id="GO:0000906">
    <property type="term" value="F:6,7-dimethyl-8-ribityllumazine synthase activity"/>
    <property type="evidence" value="ECO:0007669"/>
    <property type="project" value="UniProtKB-UniRule"/>
</dbReference>
<dbReference type="GO" id="GO:0009231">
    <property type="term" value="P:riboflavin biosynthetic process"/>
    <property type="evidence" value="ECO:0007669"/>
    <property type="project" value="UniProtKB-UniRule"/>
</dbReference>
<dbReference type="CDD" id="cd09209">
    <property type="entry name" value="Lumazine_synthase-I"/>
    <property type="match status" value="1"/>
</dbReference>
<dbReference type="FunFam" id="3.40.50.960:FF:000001">
    <property type="entry name" value="6,7-dimethyl-8-ribityllumazine synthase"/>
    <property type="match status" value="1"/>
</dbReference>
<dbReference type="Gene3D" id="3.40.50.960">
    <property type="entry name" value="Lumazine/riboflavin synthase"/>
    <property type="match status" value="1"/>
</dbReference>
<dbReference type="HAMAP" id="MF_00178">
    <property type="entry name" value="Lumazine_synth"/>
    <property type="match status" value="1"/>
</dbReference>
<dbReference type="InterPro" id="IPR034964">
    <property type="entry name" value="LS"/>
</dbReference>
<dbReference type="InterPro" id="IPR002180">
    <property type="entry name" value="LS/RS"/>
</dbReference>
<dbReference type="InterPro" id="IPR036467">
    <property type="entry name" value="LS/RS_sf"/>
</dbReference>
<dbReference type="NCBIfam" id="TIGR00114">
    <property type="entry name" value="lumazine-synth"/>
    <property type="match status" value="1"/>
</dbReference>
<dbReference type="NCBIfam" id="NF000812">
    <property type="entry name" value="PRK00061.1-4"/>
    <property type="match status" value="1"/>
</dbReference>
<dbReference type="PANTHER" id="PTHR21058:SF0">
    <property type="entry name" value="6,7-DIMETHYL-8-RIBITYLLUMAZINE SYNTHASE"/>
    <property type="match status" value="1"/>
</dbReference>
<dbReference type="PANTHER" id="PTHR21058">
    <property type="entry name" value="6,7-DIMETHYL-8-RIBITYLLUMAZINE SYNTHASE DMRL SYNTHASE LUMAZINE SYNTHASE"/>
    <property type="match status" value="1"/>
</dbReference>
<dbReference type="Pfam" id="PF00885">
    <property type="entry name" value="DMRL_synthase"/>
    <property type="match status" value="1"/>
</dbReference>
<dbReference type="SUPFAM" id="SSF52121">
    <property type="entry name" value="Lumazine synthase"/>
    <property type="match status" value="1"/>
</dbReference>
<name>RISB_CLOB8</name>
<gene>
    <name evidence="1" type="primary">ribH</name>
    <name type="ordered locus">Cbei_1227</name>
</gene>
<comment type="function">
    <text evidence="1">Catalyzes the formation of 6,7-dimethyl-8-ribityllumazine by condensation of 5-amino-6-(D-ribitylamino)uracil with 3,4-dihydroxy-2-butanone 4-phosphate. This is the penultimate step in the biosynthesis of riboflavin.</text>
</comment>
<comment type="catalytic activity">
    <reaction evidence="1">
        <text>(2S)-2-hydroxy-3-oxobutyl phosphate + 5-amino-6-(D-ribitylamino)uracil = 6,7-dimethyl-8-(1-D-ribityl)lumazine + phosphate + 2 H2O + H(+)</text>
        <dbReference type="Rhea" id="RHEA:26152"/>
        <dbReference type="ChEBI" id="CHEBI:15377"/>
        <dbReference type="ChEBI" id="CHEBI:15378"/>
        <dbReference type="ChEBI" id="CHEBI:15934"/>
        <dbReference type="ChEBI" id="CHEBI:43474"/>
        <dbReference type="ChEBI" id="CHEBI:58201"/>
        <dbReference type="ChEBI" id="CHEBI:58830"/>
        <dbReference type="EC" id="2.5.1.78"/>
    </reaction>
</comment>
<comment type="pathway">
    <text evidence="1">Cofactor biosynthesis; riboflavin biosynthesis; riboflavin from 2-hydroxy-3-oxobutyl phosphate and 5-amino-6-(D-ribitylamino)uracil: step 1/2.</text>
</comment>
<comment type="similarity">
    <text evidence="1">Belongs to the DMRL synthase family.</text>
</comment>
<sequence length="154" mass="16292">MNIFEGNLVSEGLKFGIVVGRFNEFIGGKLLEGAIDGLKRHGVKEEDIDIAWVPGAFEIPLIAKKMAKSPKYDGVICLGAVIKGSTSHYDYVCSEVSKGIASVSLESGKPVIFGVLTTNTIEQAIERAGTKAGNKGYESAVSAIEMANLLNTIG</sequence>
<feature type="chain" id="PRO_1000077229" description="6,7-dimethyl-8-ribityllumazine synthase">
    <location>
        <begin position="1"/>
        <end position="154"/>
    </location>
</feature>
<feature type="active site" description="Proton donor" evidence="1">
    <location>
        <position position="88"/>
    </location>
</feature>
<feature type="binding site" evidence="1">
    <location>
        <position position="22"/>
    </location>
    <ligand>
        <name>5-amino-6-(D-ribitylamino)uracil</name>
        <dbReference type="ChEBI" id="CHEBI:15934"/>
    </ligand>
</feature>
<feature type="binding site" evidence="1">
    <location>
        <begin position="56"/>
        <end position="58"/>
    </location>
    <ligand>
        <name>5-amino-6-(D-ribitylamino)uracil</name>
        <dbReference type="ChEBI" id="CHEBI:15934"/>
    </ligand>
</feature>
<feature type="binding site" evidence="1">
    <location>
        <begin position="80"/>
        <end position="82"/>
    </location>
    <ligand>
        <name>5-amino-6-(D-ribitylamino)uracil</name>
        <dbReference type="ChEBI" id="CHEBI:15934"/>
    </ligand>
</feature>
<feature type="binding site" evidence="1">
    <location>
        <begin position="85"/>
        <end position="86"/>
    </location>
    <ligand>
        <name>(2S)-2-hydroxy-3-oxobutyl phosphate</name>
        <dbReference type="ChEBI" id="CHEBI:58830"/>
    </ligand>
</feature>
<feature type="binding site" evidence="1">
    <location>
        <position position="113"/>
    </location>
    <ligand>
        <name>5-amino-6-(D-ribitylamino)uracil</name>
        <dbReference type="ChEBI" id="CHEBI:15934"/>
    </ligand>
</feature>
<feature type="binding site" evidence="1">
    <location>
        <position position="127"/>
    </location>
    <ligand>
        <name>(2S)-2-hydroxy-3-oxobutyl phosphate</name>
        <dbReference type="ChEBI" id="CHEBI:58830"/>
    </ligand>
</feature>
<accession>A6LSS9</accession>
<evidence type="ECO:0000255" key="1">
    <source>
        <dbReference type="HAMAP-Rule" id="MF_00178"/>
    </source>
</evidence>
<protein>
    <recommendedName>
        <fullName evidence="1">6,7-dimethyl-8-ribityllumazine synthase</fullName>
        <shortName evidence="1">DMRL synthase</shortName>
        <shortName evidence="1">LS</shortName>
        <shortName evidence="1">Lumazine synthase</shortName>
        <ecNumber evidence="1">2.5.1.78</ecNumber>
    </recommendedName>
</protein>
<proteinExistence type="inferred from homology"/>
<reference key="1">
    <citation type="submission" date="2007-06" db="EMBL/GenBank/DDBJ databases">
        <title>Complete sequence of Clostridium beijerinckii NCIMB 8052.</title>
        <authorList>
            <consortium name="US DOE Joint Genome Institute"/>
            <person name="Copeland A."/>
            <person name="Lucas S."/>
            <person name="Lapidus A."/>
            <person name="Barry K."/>
            <person name="Detter J.C."/>
            <person name="Glavina del Rio T."/>
            <person name="Hammon N."/>
            <person name="Israni S."/>
            <person name="Dalin E."/>
            <person name="Tice H."/>
            <person name="Pitluck S."/>
            <person name="Sims D."/>
            <person name="Brettin T."/>
            <person name="Bruce D."/>
            <person name="Tapia R."/>
            <person name="Brainard J."/>
            <person name="Schmutz J."/>
            <person name="Larimer F."/>
            <person name="Land M."/>
            <person name="Hauser L."/>
            <person name="Kyrpides N."/>
            <person name="Mikhailova N."/>
            <person name="Bennet G."/>
            <person name="Cann I."/>
            <person name="Chen J.-S."/>
            <person name="Contreras A.L."/>
            <person name="Jones D."/>
            <person name="Kashket E."/>
            <person name="Mitchell W."/>
            <person name="Stoddard S."/>
            <person name="Schwarz W."/>
            <person name="Qureshi N."/>
            <person name="Young M."/>
            <person name="Shi Z."/>
            <person name="Ezeji T."/>
            <person name="White B."/>
            <person name="Blaschek H."/>
            <person name="Richardson P."/>
        </authorList>
    </citation>
    <scope>NUCLEOTIDE SEQUENCE [LARGE SCALE GENOMIC DNA]</scope>
    <source>
        <strain>ATCC 51743 / NCIMB 8052</strain>
    </source>
</reference>
<organism>
    <name type="scientific">Clostridium beijerinckii (strain ATCC 51743 / NCIMB 8052)</name>
    <name type="common">Clostridium acetobutylicum</name>
    <dbReference type="NCBI Taxonomy" id="290402"/>
    <lineage>
        <taxon>Bacteria</taxon>
        <taxon>Bacillati</taxon>
        <taxon>Bacillota</taxon>
        <taxon>Clostridia</taxon>
        <taxon>Eubacteriales</taxon>
        <taxon>Clostridiaceae</taxon>
        <taxon>Clostridium</taxon>
    </lineage>
</organism>
<keyword id="KW-0686">Riboflavin biosynthesis</keyword>
<keyword id="KW-0808">Transferase</keyword>